<gene>
    <name type="primary">ZAT10</name>
    <name type="synonym">STZ</name>
    <name type="ordered locus">At1g27730</name>
    <name type="ORF">T22C5.18</name>
</gene>
<dbReference type="EMBL" id="X95573">
    <property type="protein sequence ID" value="CAA64820.1"/>
    <property type="molecule type" value="mRNA"/>
</dbReference>
<dbReference type="EMBL" id="X98670">
    <property type="protein sequence ID" value="CAA67228.1"/>
    <property type="molecule type" value="mRNA"/>
</dbReference>
<dbReference type="EMBL" id="X98671">
    <property type="protein sequence ID" value="CAA67229.1"/>
    <property type="molecule type" value="Genomic_DNA"/>
</dbReference>
<dbReference type="EMBL" id="AF250336">
    <property type="protein sequence ID" value="AAG10142.1"/>
    <property type="molecule type" value="mRNA"/>
</dbReference>
<dbReference type="EMBL" id="AC012375">
    <property type="protein sequence ID" value="AAF24959.1"/>
    <property type="status" value="ALT_SEQ"/>
    <property type="molecule type" value="Genomic_DNA"/>
</dbReference>
<dbReference type="EMBL" id="CP002684">
    <property type="protein sequence ID" value="AEE30870.1"/>
    <property type="molecule type" value="Genomic_DNA"/>
</dbReference>
<dbReference type="EMBL" id="AY034998">
    <property type="protein sequence ID" value="AAK59503.1"/>
    <property type="molecule type" value="mRNA"/>
</dbReference>
<dbReference type="EMBL" id="AY063006">
    <property type="protein sequence ID" value="AAL34180.1"/>
    <property type="molecule type" value="mRNA"/>
</dbReference>
<dbReference type="RefSeq" id="NP_174094.1">
    <property type="nucleotide sequence ID" value="NM_102538.3"/>
</dbReference>
<dbReference type="SMR" id="Q96289"/>
<dbReference type="BioGRID" id="24901">
    <property type="interactions" value="6"/>
</dbReference>
<dbReference type="FunCoup" id="Q96289">
    <property type="interactions" value="15"/>
</dbReference>
<dbReference type="STRING" id="3702.Q96289"/>
<dbReference type="PaxDb" id="3702-AT1G27730.1"/>
<dbReference type="ProteomicsDB" id="242942"/>
<dbReference type="EnsemblPlants" id="AT1G27730.1">
    <property type="protein sequence ID" value="AT1G27730.1"/>
    <property type="gene ID" value="AT1G27730"/>
</dbReference>
<dbReference type="GeneID" id="839666"/>
<dbReference type="Gramene" id="AT1G27730.1">
    <property type="protein sequence ID" value="AT1G27730.1"/>
    <property type="gene ID" value="AT1G27730"/>
</dbReference>
<dbReference type="KEGG" id="ath:AT1G27730"/>
<dbReference type="Araport" id="AT1G27730"/>
<dbReference type="TAIR" id="AT1G27730">
    <property type="gene designation" value="STZ"/>
</dbReference>
<dbReference type="eggNOG" id="KOG1721">
    <property type="taxonomic scope" value="Eukaryota"/>
</dbReference>
<dbReference type="HOGENOM" id="CLU_059471_1_2_1"/>
<dbReference type="InParanoid" id="Q96289"/>
<dbReference type="OMA" id="HGHRETF"/>
<dbReference type="OrthoDB" id="40579at2759"/>
<dbReference type="PRO" id="PR:Q96289"/>
<dbReference type="Proteomes" id="UP000006548">
    <property type="component" value="Chromosome 1"/>
</dbReference>
<dbReference type="ExpressionAtlas" id="Q96289">
    <property type="expression patterns" value="baseline and differential"/>
</dbReference>
<dbReference type="GO" id="GO:0005634">
    <property type="term" value="C:nucleus"/>
    <property type="evidence" value="ECO:0000314"/>
    <property type="project" value="TAIR"/>
</dbReference>
<dbReference type="GO" id="GO:0003700">
    <property type="term" value="F:DNA-binding transcription factor activity"/>
    <property type="evidence" value="ECO:0000250"/>
    <property type="project" value="TAIR"/>
</dbReference>
<dbReference type="GO" id="GO:0043565">
    <property type="term" value="F:sequence-specific DNA binding"/>
    <property type="evidence" value="ECO:0000314"/>
    <property type="project" value="TAIR"/>
</dbReference>
<dbReference type="GO" id="GO:0000976">
    <property type="term" value="F:transcription cis-regulatory region binding"/>
    <property type="evidence" value="ECO:0000353"/>
    <property type="project" value="TAIR"/>
</dbReference>
<dbReference type="GO" id="GO:0008270">
    <property type="term" value="F:zinc ion binding"/>
    <property type="evidence" value="ECO:0007669"/>
    <property type="project" value="UniProtKB-KW"/>
</dbReference>
<dbReference type="GO" id="GO:0071456">
    <property type="term" value="P:cellular response to hypoxia"/>
    <property type="evidence" value="ECO:0007007"/>
    <property type="project" value="TAIR"/>
</dbReference>
<dbReference type="GO" id="GO:0035264">
    <property type="term" value="P:multicellular organism growth"/>
    <property type="evidence" value="ECO:0000315"/>
    <property type="project" value="TAIR"/>
</dbReference>
<dbReference type="GO" id="GO:0045892">
    <property type="term" value="P:negative regulation of DNA-templated transcription"/>
    <property type="evidence" value="ECO:0000314"/>
    <property type="project" value="TAIR"/>
</dbReference>
<dbReference type="GO" id="GO:0010117">
    <property type="term" value="P:photoprotection"/>
    <property type="evidence" value="ECO:0000315"/>
    <property type="project" value="TAIR"/>
</dbReference>
<dbReference type="GO" id="GO:0015979">
    <property type="term" value="P:photosynthesis"/>
    <property type="evidence" value="ECO:0000315"/>
    <property type="project" value="TAIR"/>
</dbReference>
<dbReference type="GO" id="GO:0009737">
    <property type="term" value="P:response to abscisic acid"/>
    <property type="evidence" value="ECO:0000270"/>
    <property type="project" value="TAIR"/>
</dbReference>
<dbReference type="GO" id="GO:0010200">
    <property type="term" value="P:response to chitin"/>
    <property type="evidence" value="ECO:0000270"/>
    <property type="project" value="TAIR"/>
</dbReference>
<dbReference type="GO" id="GO:0009409">
    <property type="term" value="P:response to cold"/>
    <property type="evidence" value="ECO:0000270"/>
    <property type="project" value="TAIR"/>
</dbReference>
<dbReference type="GO" id="GO:0009644">
    <property type="term" value="P:response to high light intensity"/>
    <property type="evidence" value="ECO:0000270"/>
    <property type="project" value="TAIR"/>
</dbReference>
<dbReference type="GO" id="GO:0006979">
    <property type="term" value="P:response to oxidative stress"/>
    <property type="evidence" value="ECO:0000315"/>
    <property type="project" value="TAIR"/>
</dbReference>
<dbReference type="GO" id="GO:0009651">
    <property type="term" value="P:response to salt stress"/>
    <property type="evidence" value="ECO:0000270"/>
    <property type="project" value="TAIR"/>
</dbReference>
<dbReference type="GO" id="GO:0009414">
    <property type="term" value="P:response to water deprivation"/>
    <property type="evidence" value="ECO:0000315"/>
    <property type="project" value="TAIR"/>
</dbReference>
<dbReference type="GO" id="GO:0009611">
    <property type="term" value="P:response to wounding"/>
    <property type="evidence" value="ECO:0000270"/>
    <property type="project" value="TAIR"/>
</dbReference>
<dbReference type="FunFam" id="3.30.160.60:FF:003692">
    <property type="entry name" value="Zinc finger protein ZAT10"/>
    <property type="match status" value="1"/>
</dbReference>
<dbReference type="Gene3D" id="3.30.160.60">
    <property type="entry name" value="Classic Zinc Finger"/>
    <property type="match status" value="1"/>
</dbReference>
<dbReference type="InterPro" id="IPR044653">
    <property type="entry name" value="AZF1/2/3-like"/>
</dbReference>
<dbReference type="InterPro" id="IPR036236">
    <property type="entry name" value="Znf_C2H2_sf"/>
</dbReference>
<dbReference type="InterPro" id="IPR013087">
    <property type="entry name" value="Znf_C2H2_type"/>
</dbReference>
<dbReference type="PANTHER" id="PTHR45988">
    <property type="entry name" value="C2H2 TYPE ZINC FINGER TRANSCRIPTION FACTOR FAMILY-RELATED"/>
    <property type="match status" value="1"/>
</dbReference>
<dbReference type="PANTHER" id="PTHR45988:SF61">
    <property type="entry name" value="ZINC FINGER PROTEIN AZF3-RELATED"/>
    <property type="match status" value="1"/>
</dbReference>
<dbReference type="Pfam" id="PF13912">
    <property type="entry name" value="zf-C2H2_6"/>
    <property type="match status" value="2"/>
</dbReference>
<dbReference type="SMART" id="SM00355">
    <property type="entry name" value="ZnF_C2H2"/>
    <property type="match status" value="2"/>
</dbReference>
<dbReference type="SUPFAM" id="SSF57667">
    <property type="entry name" value="beta-beta-alpha zinc fingers"/>
    <property type="match status" value="1"/>
</dbReference>
<dbReference type="PROSITE" id="PS00028">
    <property type="entry name" value="ZINC_FINGER_C2H2_1"/>
    <property type="match status" value="2"/>
</dbReference>
<dbReference type="PROSITE" id="PS50157">
    <property type="entry name" value="ZINC_FINGER_C2H2_2"/>
    <property type="match status" value="2"/>
</dbReference>
<proteinExistence type="evidence at transcript level"/>
<protein>
    <recommendedName>
        <fullName>Zinc finger protein ZAT10</fullName>
    </recommendedName>
    <alternativeName>
        <fullName>Salt-tolerance zinc finger</fullName>
    </alternativeName>
</protein>
<feature type="chain" id="PRO_0000409719" description="Zinc finger protein ZAT10">
    <location>
        <begin position="1"/>
        <end position="227"/>
    </location>
</feature>
<feature type="zinc finger region" description="C2H2-type 1" evidence="1">
    <location>
        <begin position="80"/>
        <end position="102"/>
    </location>
</feature>
<feature type="zinc finger region" description="C2H2-type 2" evidence="1">
    <location>
        <begin position="136"/>
        <end position="158"/>
    </location>
</feature>
<feature type="region of interest" description="Disordered" evidence="2">
    <location>
        <begin position="96"/>
        <end position="128"/>
    </location>
</feature>
<feature type="region of interest" description="Disordered" evidence="2">
    <location>
        <begin position="168"/>
        <end position="189"/>
    </location>
</feature>
<feature type="compositionally biased region" description="Low complexity" evidence="2">
    <location>
        <begin position="119"/>
        <end position="128"/>
    </location>
</feature>
<feature type="compositionally biased region" description="Polar residues" evidence="2">
    <location>
        <begin position="174"/>
        <end position="186"/>
    </location>
</feature>
<feature type="sequence conflict" description="In Ref. 2; CAA67228/CAA67229." evidence="13" ref="2">
    <original>C</original>
    <variation>W</variation>
    <location>
        <position position="58"/>
    </location>
</feature>
<name>ZAT10_ARATH</name>
<sequence length="227" mass="24614">MALEALTSPRLASPIPPLFEDSSVFHGVEHWTKGKRSKRSRSDFHHQNLTEEEYLAFCLMLLARDNRQPPPPPAVEKLSYKCSVCDKTFSSYQALGGHKASHRKNLSQTLSGGGDDHSTSSATTTSAVTTGSGKSHVCTICNKSFPSGQALGGHKRCHYEGNNNINTSSVSNSEGAGSTSHVSSSHRGFDLNIPPIPEFSMVNGDDEVMSPMPAKKPRFDFPVKLQL</sequence>
<keyword id="KW-0479">Metal-binding</keyword>
<keyword id="KW-0539">Nucleus</keyword>
<keyword id="KW-1185">Reference proteome</keyword>
<keyword id="KW-0677">Repeat</keyword>
<keyword id="KW-0678">Repressor</keyword>
<keyword id="KW-0804">Transcription</keyword>
<keyword id="KW-0805">Transcription regulation</keyword>
<keyword id="KW-0862">Zinc</keyword>
<keyword id="KW-0863">Zinc-finger</keyword>
<comment type="function">
    <text evidence="5 7 8 9 10 11">Transcriptional repressor involved in abiotic stress responses. Can repress the stress responsive genes DREB1A and LTI78. Probably involved in jasmonate (JA) early signaling response. May regulate the expression of the JA biosynthesis gene LOX3 and control the expression of TIFY10A/JAZ1, a key repressor in the JA signaling cascade.</text>
</comment>
<comment type="subcellular location">
    <subcellularLocation>
        <location evidence="7">Nucleus</location>
    </subcellularLocation>
</comment>
<comment type="tissue specificity">
    <text evidence="3 7 11 12">Expressed in roots, stems and leaves.</text>
</comment>
<comment type="induction">
    <text evidence="3 4 6 7 8 11">By salt, cold and drought stresses. Down-regulated by gibberellin.</text>
</comment>
<comment type="miscellaneous">
    <text>Plants overexpressing ZAT10 show growth retardation and enhanced tolerance to drought, salt, heat and osmotic stresses. Plants silencing ZAT10 show enhanced tolerance to salt and osmotic stresses.</text>
</comment>
<comment type="sequence caution" evidence="13">
    <conflict type="erroneous gene model prediction">
        <sequence resource="EMBL-CDS" id="AAF24959"/>
    </conflict>
</comment>
<reference key="1">
    <citation type="journal article" date="1996" name="J. Biol. Chem.">
        <title>Two classes of plant cDNA clones differentially complement yeast calcineurin mutants and increase salt tolerance of wild-type yeast.</title>
        <authorList>
            <person name="Lippuner V."/>
            <person name="Cyert M.S."/>
            <person name="Gasser C.S."/>
        </authorList>
    </citation>
    <scope>NUCLEOTIDE SEQUENCE [MRNA]</scope>
    <scope>FUNCTION</scope>
    <scope>TISSUE SPECIFICITY</scope>
    <scope>INDUCTION BY SALT</scope>
</reference>
<reference key="2">
    <citation type="journal article" date="1997" name="Plant Mol. Biol.">
        <title>Isolation and characterisation of a diverse family of Arabidopsis two and three-fingered protein genes and cDNA's.</title>
        <authorList>
            <person name="Meissner R."/>
            <person name="Michael A.J."/>
        </authorList>
    </citation>
    <scope>NUCLEOTIDE SEQUENCE [GENOMIC DNA / MRNA]</scope>
    <scope>TISSUE SPECIFICITY</scope>
    <source>
        <strain>cv. Columbia</strain>
    </source>
</reference>
<reference key="3">
    <citation type="journal article" date="2000" name="Plant J.">
        <title>Functional identification of an Arabidopsis Snf4 ortholog by screening for heterologous multicopy suppressors of snf4 deficiency in yeast.</title>
        <authorList>
            <person name="Kleinow T."/>
            <person name="Bhalerao R."/>
            <person name="Breuer F."/>
            <person name="Umeda M."/>
            <person name="Salchert K."/>
            <person name="Koncz C."/>
        </authorList>
    </citation>
    <scope>NUCLEOTIDE SEQUENCE [MRNA]</scope>
    <source>
        <strain>cv. Columbia</strain>
    </source>
</reference>
<reference key="4">
    <citation type="journal article" date="2000" name="Nature">
        <title>Sequence and analysis of chromosome 1 of the plant Arabidopsis thaliana.</title>
        <authorList>
            <person name="Theologis A."/>
            <person name="Ecker J.R."/>
            <person name="Palm C.J."/>
            <person name="Federspiel N.A."/>
            <person name="Kaul S."/>
            <person name="White O."/>
            <person name="Alonso J."/>
            <person name="Altafi H."/>
            <person name="Araujo R."/>
            <person name="Bowman C.L."/>
            <person name="Brooks S.Y."/>
            <person name="Buehler E."/>
            <person name="Chan A."/>
            <person name="Chao Q."/>
            <person name="Chen H."/>
            <person name="Cheuk R.F."/>
            <person name="Chin C.W."/>
            <person name="Chung M.K."/>
            <person name="Conn L."/>
            <person name="Conway A.B."/>
            <person name="Conway A.R."/>
            <person name="Creasy T.H."/>
            <person name="Dewar K."/>
            <person name="Dunn P."/>
            <person name="Etgu P."/>
            <person name="Feldblyum T.V."/>
            <person name="Feng J.-D."/>
            <person name="Fong B."/>
            <person name="Fujii C.Y."/>
            <person name="Gill J.E."/>
            <person name="Goldsmith A.D."/>
            <person name="Haas B."/>
            <person name="Hansen N.F."/>
            <person name="Hughes B."/>
            <person name="Huizar L."/>
            <person name="Hunter J.L."/>
            <person name="Jenkins J."/>
            <person name="Johnson-Hopson C."/>
            <person name="Khan S."/>
            <person name="Khaykin E."/>
            <person name="Kim C.J."/>
            <person name="Koo H.L."/>
            <person name="Kremenetskaia I."/>
            <person name="Kurtz D.B."/>
            <person name="Kwan A."/>
            <person name="Lam B."/>
            <person name="Langin-Hooper S."/>
            <person name="Lee A."/>
            <person name="Lee J.M."/>
            <person name="Lenz C.A."/>
            <person name="Li J.H."/>
            <person name="Li Y.-P."/>
            <person name="Lin X."/>
            <person name="Liu S.X."/>
            <person name="Liu Z.A."/>
            <person name="Luros J.S."/>
            <person name="Maiti R."/>
            <person name="Marziali A."/>
            <person name="Militscher J."/>
            <person name="Miranda M."/>
            <person name="Nguyen M."/>
            <person name="Nierman W.C."/>
            <person name="Osborne B.I."/>
            <person name="Pai G."/>
            <person name="Peterson J."/>
            <person name="Pham P.K."/>
            <person name="Rizzo M."/>
            <person name="Rooney T."/>
            <person name="Rowley D."/>
            <person name="Sakano H."/>
            <person name="Salzberg S.L."/>
            <person name="Schwartz J.R."/>
            <person name="Shinn P."/>
            <person name="Southwick A.M."/>
            <person name="Sun H."/>
            <person name="Tallon L.J."/>
            <person name="Tambunga G."/>
            <person name="Toriumi M.J."/>
            <person name="Town C.D."/>
            <person name="Utterback T."/>
            <person name="Van Aken S."/>
            <person name="Vaysberg M."/>
            <person name="Vysotskaia V.S."/>
            <person name="Walker M."/>
            <person name="Wu D."/>
            <person name="Yu G."/>
            <person name="Fraser C.M."/>
            <person name="Venter J.C."/>
            <person name="Davis R.W."/>
        </authorList>
    </citation>
    <scope>NUCLEOTIDE SEQUENCE [LARGE SCALE GENOMIC DNA]</scope>
    <source>
        <strain>cv. Columbia</strain>
    </source>
</reference>
<reference key="5">
    <citation type="journal article" date="2017" name="Plant J.">
        <title>Araport11: a complete reannotation of the Arabidopsis thaliana reference genome.</title>
        <authorList>
            <person name="Cheng C.Y."/>
            <person name="Krishnakumar V."/>
            <person name="Chan A.P."/>
            <person name="Thibaud-Nissen F."/>
            <person name="Schobel S."/>
            <person name="Town C.D."/>
        </authorList>
    </citation>
    <scope>GENOME REANNOTATION</scope>
    <source>
        <strain>cv. Columbia</strain>
    </source>
</reference>
<reference key="6">
    <citation type="journal article" date="2003" name="Science">
        <title>Empirical analysis of transcriptional activity in the Arabidopsis genome.</title>
        <authorList>
            <person name="Yamada K."/>
            <person name="Lim J."/>
            <person name="Dale J.M."/>
            <person name="Chen H."/>
            <person name="Shinn P."/>
            <person name="Palm C.J."/>
            <person name="Southwick A.M."/>
            <person name="Wu H.C."/>
            <person name="Kim C.J."/>
            <person name="Nguyen M."/>
            <person name="Pham P.K."/>
            <person name="Cheuk R.F."/>
            <person name="Karlin-Newmann G."/>
            <person name="Liu S.X."/>
            <person name="Lam B."/>
            <person name="Sakano H."/>
            <person name="Wu T."/>
            <person name="Yu G."/>
            <person name="Miranda M."/>
            <person name="Quach H.L."/>
            <person name="Tripp M."/>
            <person name="Chang C.H."/>
            <person name="Lee J.M."/>
            <person name="Toriumi M.J."/>
            <person name="Chan M.M."/>
            <person name="Tang C.C."/>
            <person name="Onodera C.S."/>
            <person name="Deng J.M."/>
            <person name="Akiyama K."/>
            <person name="Ansari Y."/>
            <person name="Arakawa T."/>
            <person name="Banh J."/>
            <person name="Banno F."/>
            <person name="Bowser L."/>
            <person name="Brooks S.Y."/>
            <person name="Carninci P."/>
            <person name="Chao Q."/>
            <person name="Choy N."/>
            <person name="Enju A."/>
            <person name="Goldsmith A.D."/>
            <person name="Gurjal M."/>
            <person name="Hansen N.F."/>
            <person name="Hayashizaki Y."/>
            <person name="Johnson-Hopson C."/>
            <person name="Hsuan V.W."/>
            <person name="Iida K."/>
            <person name="Karnes M."/>
            <person name="Khan S."/>
            <person name="Koesema E."/>
            <person name="Ishida J."/>
            <person name="Jiang P.X."/>
            <person name="Jones T."/>
            <person name="Kawai J."/>
            <person name="Kamiya A."/>
            <person name="Meyers C."/>
            <person name="Nakajima M."/>
            <person name="Narusaka M."/>
            <person name="Seki M."/>
            <person name="Sakurai T."/>
            <person name="Satou M."/>
            <person name="Tamse R."/>
            <person name="Vaysberg M."/>
            <person name="Wallender E.K."/>
            <person name="Wong C."/>
            <person name="Yamamura Y."/>
            <person name="Yuan S."/>
            <person name="Shinozaki K."/>
            <person name="Davis R.W."/>
            <person name="Theologis A."/>
            <person name="Ecker J.R."/>
        </authorList>
    </citation>
    <scope>NUCLEOTIDE SEQUENCE [LARGE SCALE MRNA]</scope>
    <source>
        <strain>cv. Columbia</strain>
    </source>
</reference>
<reference key="7">
    <citation type="journal article" date="2000" name="Gene">
        <title>Expression of a subset of the Arabidopsis Cys(2)/His(2)-type zinc-finger protein gene family under water stress.</title>
        <authorList>
            <person name="Sakamoto H."/>
            <person name="Araki T."/>
            <person name="Meshi T."/>
            <person name="Iwabuchi M."/>
        </authorList>
    </citation>
    <scope>TISSUE SPECIFICITY</scope>
    <scope>INDUCTION</scope>
</reference>
<reference key="8">
    <citation type="journal article" date="2001" name="Plant Physiol.">
        <title>Genes that are uniquely stress regulated in salt overly sensitive (sos) mutants.</title>
        <authorList>
            <person name="Gong Z."/>
            <person name="Koiwa H."/>
            <person name="Cushman M.A."/>
            <person name="Ray A."/>
            <person name="Bufford D."/>
            <person name="Kore-eda S."/>
            <person name="Matsumoto T.K."/>
            <person name="Zhu J."/>
            <person name="Cushman J.C."/>
            <person name="Bressan R.A."/>
            <person name="Hasegawa P.M."/>
        </authorList>
    </citation>
    <scope>INDUCTION</scope>
</reference>
<reference key="9">
    <citation type="journal article" date="2002" name="EMBO J.">
        <title>LOS2, a genetic locus required for cold-responsive gene transcription encodes a bi-functional enolase.</title>
        <authorList>
            <person name="Lee H."/>
            <person name="Guo Y."/>
            <person name="Ohta M."/>
            <person name="Xiong L."/>
            <person name="Stevenson B."/>
            <person name="Zhu J.K."/>
        </authorList>
    </citation>
    <scope>FUNCTION</scope>
</reference>
<reference key="10">
    <citation type="journal article" date="2004" name="Plant Physiol.">
        <title>Arabidopsis Cys2/His2-type zinc-finger proteins function as transcription repressors under drought, cold, and high-salinity stress conditions.</title>
        <authorList>
            <person name="Sakamoto H."/>
            <person name="Maruyama K."/>
            <person name="Sakuma Y."/>
            <person name="Meshi T."/>
            <person name="Iwabuchi M."/>
            <person name="Shinozaki K."/>
            <person name="Yamaguchi-Shinozaki K."/>
        </authorList>
    </citation>
    <scope>FUNCTION</scope>
    <scope>SUBCELLULAR LOCATION</scope>
    <scope>TISSUE SPECIFICITY</scope>
    <scope>INDUCTION</scope>
</reference>
<reference key="11">
    <citation type="journal article" date="2003" name="Plant Cell">
        <title>Gibberellin biosynthesis and response during Arabidopsis seed germination.</title>
        <authorList>
            <person name="Ogawa M."/>
            <person name="Hanada A."/>
            <person name="Yamauchi Y."/>
            <person name="Kuwahara A."/>
            <person name="Kamiya Y."/>
            <person name="Yamaguchi S."/>
        </authorList>
    </citation>
    <scope>INDUCTION</scope>
</reference>
<reference key="12">
    <citation type="journal article" date="2006" name="FEBS Lett.">
        <title>Gain- and loss-of-function mutations in Zat10 enhance the tolerance of plants to abiotic stress.</title>
        <authorList>
            <person name="Mittler R."/>
            <person name="Kim Y."/>
            <person name="Song L."/>
            <person name="Coutu J."/>
            <person name="Coutu A."/>
            <person name="Ciftci-Yilmaz S."/>
            <person name="Lee H."/>
            <person name="Stevenson B."/>
            <person name="Zhu J.K."/>
        </authorList>
    </citation>
    <scope>FUNCTION</scope>
    <scope>INDUCTION</scope>
</reference>
<reference key="13">
    <citation type="journal article" date="2008" name="Proc. Natl. Acad. Sci. U.S.A.">
        <title>Mapping methyl jasmonate-mediated transcriptional reprogramming of metabolism and cell cycle progression in cultured Arabidopsis cells.</title>
        <authorList>
            <person name="Pauwels L."/>
            <person name="Morreel K."/>
            <person name="De Witte E."/>
            <person name="Lammertyn F."/>
            <person name="Van Montagu M."/>
            <person name="Boerjan W."/>
            <person name="Inze D."/>
            <person name="Goossens A."/>
        </authorList>
    </citation>
    <scope>FUNCTION</scope>
</reference>
<reference key="14">
    <citation type="journal article" date="2008" name="Plant Signal. Behav.">
        <title>Fine-tuning of early events in the jasmonate response.</title>
        <authorList>
            <person name="Pauwels L."/>
            <person name="Goossens A."/>
        </authorList>
    </citation>
    <scope>FUNCTION</scope>
</reference>
<organism>
    <name type="scientific">Arabidopsis thaliana</name>
    <name type="common">Mouse-ear cress</name>
    <dbReference type="NCBI Taxonomy" id="3702"/>
    <lineage>
        <taxon>Eukaryota</taxon>
        <taxon>Viridiplantae</taxon>
        <taxon>Streptophyta</taxon>
        <taxon>Embryophyta</taxon>
        <taxon>Tracheophyta</taxon>
        <taxon>Spermatophyta</taxon>
        <taxon>Magnoliopsida</taxon>
        <taxon>eudicotyledons</taxon>
        <taxon>Gunneridae</taxon>
        <taxon>Pentapetalae</taxon>
        <taxon>rosids</taxon>
        <taxon>malvids</taxon>
        <taxon>Brassicales</taxon>
        <taxon>Brassicaceae</taxon>
        <taxon>Camelineae</taxon>
        <taxon>Arabidopsis</taxon>
    </lineage>
</organism>
<evidence type="ECO:0000255" key="1">
    <source>
        <dbReference type="PROSITE-ProRule" id="PRU00042"/>
    </source>
</evidence>
<evidence type="ECO:0000256" key="2">
    <source>
        <dbReference type="SAM" id="MobiDB-lite"/>
    </source>
</evidence>
<evidence type="ECO:0000269" key="3">
    <source>
    </source>
</evidence>
<evidence type="ECO:0000269" key="4">
    <source>
    </source>
</evidence>
<evidence type="ECO:0000269" key="5">
    <source>
    </source>
</evidence>
<evidence type="ECO:0000269" key="6">
    <source>
    </source>
</evidence>
<evidence type="ECO:0000269" key="7">
    <source>
    </source>
</evidence>
<evidence type="ECO:0000269" key="8">
    <source>
    </source>
</evidence>
<evidence type="ECO:0000269" key="9">
    <source>
    </source>
</evidence>
<evidence type="ECO:0000269" key="10">
    <source>
    </source>
</evidence>
<evidence type="ECO:0000269" key="11">
    <source>
    </source>
</evidence>
<evidence type="ECO:0000269" key="12">
    <source>
    </source>
</evidence>
<evidence type="ECO:0000305" key="13"/>
<accession>Q96289</accession>
<accession>Q42423</accession>
<accession>Q9SFY6</accession>